<dbReference type="EC" id="4.1.99.17" evidence="1"/>
<dbReference type="EMBL" id="AE000657">
    <property type="protein sequence ID" value="AAC07214.1"/>
    <property type="molecule type" value="Genomic_DNA"/>
</dbReference>
<dbReference type="PIR" id="H70403">
    <property type="entry name" value="H70403"/>
</dbReference>
<dbReference type="RefSeq" id="NP_213823.1">
    <property type="nucleotide sequence ID" value="NC_000918.1"/>
</dbReference>
<dbReference type="RefSeq" id="WP_010880761.1">
    <property type="nucleotide sequence ID" value="NC_000918.1"/>
</dbReference>
<dbReference type="SMR" id="O67259"/>
<dbReference type="FunCoup" id="O67259">
    <property type="interactions" value="401"/>
</dbReference>
<dbReference type="STRING" id="224324.aq_1204"/>
<dbReference type="EnsemblBacteria" id="AAC07214">
    <property type="protein sequence ID" value="AAC07214"/>
    <property type="gene ID" value="aq_1204"/>
</dbReference>
<dbReference type="KEGG" id="aae:aq_1204"/>
<dbReference type="PATRIC" id="fig|224324.8.peg.937"/>
<dbReference type="eggNOG" id="COG0422">
    <property type="taxonomic scope" value="Bacteria"/>
</dbReference>
<dbReference type="HOGENOM" id="CLU_013181_2_1_0"/>
<dbReference type="InParanoid" id="O67259"/>
<dbReference type="OrthoDB" id="9805897at2"/>
<dbReference type="UniPathway" id="UPA00060"/>
<dbReference type="Proteomes" id="UP000000798">
    <property type="component" value="Chromosome"/>
</dbReference>
<dbReference type="GO" id="GO:0005829">
    <property type="term" value="C:cytosol"/>
    <property type="evidence" value="ECO:0000318"/>
    <property type="project" value="GO_Central"/>
</dbReference>
<dbReference type="GO" id="GO:0051539">
    <property type="term" value="F:4 iron, 4 sulfur cluster binding"/>
    <property type="evidence" value="ECO:0007669"/>
    <property type="project" value="UniProtKB-KW"/>
</dbReference>
<dbReference type="GO" id="GO:0016830">
    <property type="term" value="F:carbon-carbon lyase activity"/>
    <property type="evidence" value="ECO:0007669"/>
    <property type="project" value="InterPro"/>
</dbReference>
<dbReference type="GO" id="GO:0008270">
    <property type="term" value="F:zinc ion binding"/>
    <property type="evidence" value="ECO:0007669"/>
    <property type="project" value="UniProtKB-UniRule"/>
</dbReference>
<dbReference type="GO" id="GO:0009228">
    <property type="term" value="P:thiamine biosynthetic process"/>
    <property type="evidence" value="ECO:0000318"/>
    <property type="project" value="GO_Central"/>
</dbReference>
<dbReference type="GO" id="GO:0009229">
    <property type="term" value="P:thiamine diphosphate biosynthetic process"/>
    <property type="evidence" value="ECO:0007669"/>
    <property type="project" value="UniProtKB-UniRule"/>
</dbReference>
<dbReference type="FunFam" id="3.20.20.540:FF:000001">
    <property type="entry name" value="Phosphomethylpyrimidine synthase"/>
    <property type="match status" value="1"/>
</dbReference>
<dbReference type="Gene3D" id="6.10.250.620">
    <property type="match status" value="1"/>
</dbReference>
<dbReference type="Gene3D" id="3.20.20.540">
    <property type="entry name" value="Radical SAM ThiC family, central domain"/>
    <property type="match status" value="1"/>
</dbReference>
<dbReference type="HAMAP" id="MF_00089">
    <property type="entry name" value="ThiC"/>
    <property type="match status" value="1"/>
</dbReference>
<dbReference type="InterPro" id="IPR037509">
    <property type="entry name" value="ThiC"/>
</dbReference>
<dbReference type="InterPro" id="IPR038521">
    <property type="entry name" value="ThiC/Bza_core_dom"/>
</dbReference>
<dbReference type="InterPro" id="IPR002817">
    <property type="entry name" value="ThiC/BzaA/B"/>
</dbReference>
<dbReference type="NCBIfam" id="NF006763">
    <property type="entry name" value="PRK09284.1"/>
    <property type="match status" value="1"/>
</dbReference>
<dbReference type="NCBIfam" id="NF009895">
    <property type="entry name" value="PRK13352.1"/>
    <property type="match status" value="1"/>
</dbReference>
<dbReference type="NCBIfam" id="TIGR00190">
    <property type="entry name" value="thiC"/>
    <property type="match status" value="1"/>
</dbReference>
<dbReference type="PANTHER" id="PTHR30557:SF1">
    <property type="entry name" value="PHOSPHOMETHYLPYRIMIDINE SYNTHASE, CHLOROPLASTIC"/>
    <property type="match status" value="1"/>
</dbReference>
<dbReference type="PANTHER" id="PTHR30557">
    <property type="entry name" value="THIAMINE BIOSYNTHESIS PROTEIN THIC"/>
    <property type="match status" value="1"/>
</dbReference>
<dbReference type="Pfam" id="PF01964">
    <property type="entry name" value="ThiC_Rad_SAM"/>
    <property type="match status" value="1"/>
</dbReference>
<dbReference type="SFLD" id="SFLDF00407">
    <property type="entry name" value="phosphomethylpyrimidine_syntha"/>
    <property type="match status" value="1"/>
</dbReference>
<dbReference type="SFLD" id="SFLDG01114">
    <property type="entry name" value="phosphomethylpyrimidine_syntha"/>
    <property type="match status" value="1"/>
</dbReference>
<dbReference type="SFLD" id="SFLDS00113">
    <property type="entry name" value="Radical_SAM_Phosphomethylpyrim"/>
    <property type="match status" value="1"/>
</dbReference>
<comment type="function">
    <text evidence="1">Catalyzes the synthesis of the hydroxymethylpyrimidine phosphate (HMP-P) moiety of thiamine from aminoimidazole ribotide (AIR) in a radical S-adenosyl-L-methionine (SAM)-dependent reaction.</text>
</comment>
<comment type="catalytic activity">
    <reaction evidence="1">
        <text>5-amino-1-(5-phospho-beta-D-ribosyl)imidazole + S-adenosyl-L-methionine = 4-amino-2-methyl-5-(phosphooxymethyl)pyrimidine + CO + 5'-deoxyadenosine + formate + L-methionine + 3 H(+)</text>
        <dbReference type="Rhea" id="RHEA:24840"/>
        <dbReference type="ChEBI" id="CHEBI:15378"/>
        <dbReference type="ChEBI" id="CHEBI:15740"/>
        <dbReference type="ChEBI" id="CHEBI:17245"/>
        <dbReference type="ChEBI" id="CHEBI:17319"/>
        <dbReference type="ChEBI" id="CHEBI:57844"/>
        <dbReference type="ChEBI" id="CHEBI:58354"/>
        <dbReference type="ChEBI" id="CHEBI:59789"/>
        <dbReference type="ChEBI" id="CHEBI:137981"/>
        <dbReference type="EC" id="4.1.99.17"/>
    </reaction>
</comment>
<comment type="cofactor">
    <cofactor evidence="1">
        <name>[4Fe-4S] cluster</name>
        <dbReference type="ChEBI" id="CHEBI:49883"/>
    </cofactor>
    <text evidence="1">Binds 1 [4Fe-4S] cluster per subunit. The cluster is coordinated with 3 cysteines and an exchangeable S-adenosyl-L-methionine.</text>
</comment>
<comment type="pathway">
    <text evidence="1">Cofactor biosynthesis; thiamine diphosphate biosynthesis.</text>
</comment>
<comment type="similarity">
    <text evidence="1">Belongs to the ThiC family.</text>
</comment>
<feature type="chain" id="PRO_0000152780" description="Phosphomethylpyrimidine synthase">
    <location>
        <begin position="1"/>
        <end position="457"/>
    </location>
</feature>
<feature type="binding site" evidence="1">
    <location>
        <position position="81"/>
    </location>
    <ligand>
        <name>substrate</name>
    </ligand>
</feature>
<feature type="binding site" evidence="1">
    <location>
        <position position="110"/>
    </location>
    <ligand>
        <name>substrate</name>
    </ligand>
</feature>
<feature type="binding site" evidence="1">
    <location>
        <position position="139"/>
    </location>
    <ligand>
        <name>substrate</name>
    </ligand>
</feature>
<feature type="binding site" evidence="1">
    <location>
        <position position="175"/>
    </location>
    <ligand>
        <name>substrate</name>
    </ligand>
</feature>
<feature type="binding site" evidence="1">
    <location>
        <begin position="195"/>
        <end position="197"/>
    </location>
    <ligand>
        <name>substrate</name>
    </ligand>
</feature>
<feature type="binding site" evidence="1">
    <location>
        <begin position="236"/>
        <end position="239"/>
    </location>
    <ligand>
        <name>substrate</name>
    </ligand>
</feature>
<feature type="binding site" evidence="1">
    <location>
        <position position="275"/>
    </location>
    <ligand>
        <name>substrate</name>
    </ligand>
</feature>
<feature type="binding site" evidence="1">
    <location>
        <position position="279"/>
    </location>
    <ligand>
        <name>Zn(2+)</name>
        <dbReference type="ChEBI" id="CHEBI:29105"/>
    </ligand>
</feature>
<feature type="binding site" evidence="1">
    <location>
        <position position="302"/>
    </location>
    <ligand>
        <name>substrate</name>
    </ligand>
</feature>
<feature type="binding site" evidence="1">
    <location>
        <position position="343"/>
    </location>
    <ligand>
        <name>Zn(2+)</name>
        <dbReference type="ChEBI" id="CHEBI:29105"/>
    </ligand>
</feature>
<feature type="binding site" evidence="1">
    <location>
        <position position="423"/>
    </location>
    <ligand>
        <name>[4Fe-4S] cluster</name>
        <dbReference type="ChEBI" id="CHEBI:49883"/>
        <note>4Fe-4S-S-AdoMet</note>
    </ligand>
</feature>
<feature type="binding site" evidence="1">
    <location>
        <position position="426"/>
    </location>
    <ligand>
        <name>[4Fe-4S] cluster</name>
        <dbReference type="ChEBI" id="CHEBI:49883"/>
        <note>4Fe-4S-S-AdoMet</note>
    </ligand>
</feature>
<feature type="binding site" evidence="1">
    <location>
        <position position="431"/>
    </location>
    <ligand>
        <name>[4Fe-4S] cluster</name>
        <dbReference type="ChEBI" id="CHEBI:49883"/>
        <note>4Fe-4S-S-AdoMet</note>
    </ligand>
</feature>
<sequence length="457" mass="51049">MLRAEWVEKRKRFKNKTQMHLARQGIITEEMEYVAKREGLHPEFVRQEVARGRMIIPANINHLHLEPMCIGINSKVKVNANIGNSGLASDIPTEVEKAKVAIKYGADTIMDLSTGEAIKETREAIINVSTVPVGTVPIYEAWKIAKGNVKELTVDLILDVIEEQARQGVSYMTIHAGILREHLPLVQHRVMGIVSRGGAILAQWMAEHGKQNPLYEHFDKICEIFKKYDVSFSLGDALRPGCIEDATDDAQLAELKVLGELVEKAWKHDVQAMVEGPGHVPLHQVEFNMKIQQEWCHEAPFYVLGPLVLDVAPGYDHIGSAIGGALAGWAGAAMLCYITPKEHLGLPNVEDVKQGVIAYKIAAHAADIAKHWPGARDWDLAMSIARYNFDWNKQFELAMDPETARAYHDETLPQEGYKTAKFCSMCGPEFCSYKISQKVQEKVSPEELIENGNWVAP</sequence>
<gene>
    <name evidence="1" type="primary">thiC</name>
    <name type="ordered locus">aq_1204</name>
</gene>
<reference key="1">
    <citation type="journal article" date="1998" name="Nature">
        <title>The complete genome of the hyperthermophilic bacterium Aquifex aeolicus.</title>
        <authorList>
            <person name="Deckert G."/>
            <person name="Warren P.V."/>
            <person name="Gaasterland T."/>
            <person name="Young W.G."/>
            <person name="Lenox A.L."/>
            <person name="Graham D.E."/>
            <person name="Overbeek R."/>
            <person name="Snead M.A."/>
            <person name="Keller M."/>
            <person name="Aujay M."/>
            <person name="Huber R."/>
            <person name="Feldman R.A."/>
            <person name="Short J.M."/>
            <person name="Olsen G.J."/>
            <person name="Swanson R.V."/>
        </authorList>
    </citation>
    <scope>NUCLEOTIDE SEQUENCE [LARGE SCALE GENOMIC DNA]</scope>
    <source>
        <strain>VF5</strain>
    </source>
</reference>
<name>THIC_AQUAE</name>
<organism>
    <name type="scientific">Aquifex aeolicus (strain VF5)</name>
    <dbReference type="NCBI Taxonomy" id="224324"/>
    <lineage>
        <taxon>Bacteria</taxon>
        <taxon>Pseudomonadati</taxon>
        <taxon>Aquificota</taxon>
        <taxon>Aquificia</taxon>
        <taxon>Aquificales</taxon>
        <taxon>Aquificaceae</taxon>
        <taxon>Aquifex</taxon>
    </lineage>
</organism>
<evidence type="ECO:0000255" key="1">
    <source>
        <dbReference type="HAMAP-Rule" id="MF_00089"/>
    </source>
</evidence>
<protein>
    <recommendedName>
        <fullName evidence="1">Phosphomethylpyrimidine synthase</fullName>
        <ecNumber evidence="1">4.1.99.17</ecNumber>
    </recommendedName>
    <alternativeName>
        <fullName evidence="1">Hydroxymethylpyrimidine phosphate synthase</fullName>
        <shortName evidence="1">HMP-P synthase</shortName>
        <shortName evidence="1">HMP-phosphate synthase</shortName>
        <shortName evidence="1">HMPP synthase</shortName>
    </alternativeName>
    <alternativeName>
        <fullName evidence="1">Thiamine biosynthesis protein ThiC</fullName>
    </alternativeName>
</protein>
<proteinExistence type="inferred from homology"/>
<keyword id="KW-0004">4Fe-4S</keyword>
<keyword id="KW-0408">Iron</keyword>
<keyword id="KW-0411">Iron-sulfur</keyword>
<keyword id="KW-0456">Lyase</keyword>
<keyword id="KW-0479">Metal-binding</keyword>
<keyword id="KW-1185">Reference proteome</keyword>
<keyword id="KW-0949">S-adenosyl-L-methionine</keyword>
<keyword id="KW-0784">Thiamine biosynthesis</keyword>
<keyword id="KW-0862">Zinc</keyword>
<accession>O67259</accession>